<protein>
    <recommendedName>
        <fullName evidence="3">Tungstate uptake system ATP-binding protein TupC</fullName>
        <ecNumber evidence="4">7.3.2.6</ecNumber>
    </recommendedName>
</protein>
<organism>
    <name type="scientific">Campylobacter jejuni subsp. jejuni serotype O:2 (strain ATCC 700819 / NCTC 11168)</name>
    <dbReference type="NCBI Taxonomy" id="192222"/>
    <lineage>
        <taxon>Bacteria</taxon>
        <taxon>Pseudomonadati</taxon>
        <taxon>Campylobacterota</taxon>
        <taxon>Epsilonproteobacteria</taxon>
        <taxon>Campylobacterales</taxon>
        <taxon>Campylobacteraceae</taxon>
        <taxon>Campylobacter</taxon>
    </lineage>
</organism>
<dbReference type="EC" id="7.3.2.6" evidence="4"/>
<dbReference type="EMBL" id="AL111168">
    <property type="protein sequence ID" value="CAL35638.1"/>
    <property type="molecule type" value="Genomic_DNA"/>
</dbReference>
<dbReference type="PIR" id="H81300">
    <property type="entry name" value="H81300"/>
</dbReference>
<dbReference type="RefSeq" id="WP_002868367.1">
    <property type="nucleotide sequence ID" value="NZ_SZUC01000003.1"/>
</dbReference>
<dbReference type="RefSeq" id="YP_002344910.1">
    <property type="nucleotide sequence ID" value="NC_002163.1"/>
</dbReference>
<dbReference type="SMR" id="Q0P887"/>
<dbReference type="IntAct" id="Q0P887">
    <property type="interactions" value="5"/>
</dbReference>
<dbReference type="STRING" id="192222.Cj1538c"/>
<dbReference type="TCDB" id="3.A.1.6.11">
    <property type="family name" value="the atp-binding cassette (abc) superfamily"/>
</dbReference>
<dbReference type="PaxDb" id="192222-Cj1538c"/>
<dbReference type="EnsemblBacteria" id="CAL35638">
    <property type="protein sequence ID" value="CAL35638"/>
    <property type="gene ID" value="Cj1538c"/>
</dbReference>
<dbReference type="GeneID" id="905820"/>
<dbReference type="KEGG" id="cje:Cj1538c"/>
<dbReference type="PATRIC" id="fig|192222.6.peg.1515"/>
<dbReference type="eggNOG" id="COG3839">
    <property type="taxonomic scope" value="Bacteria"/>
</dbReference>
<dbReference type="HOGENOM" id="CLU_000604_1_1_7"/>
<dbReference type="OrthoDB" id="9809450at2"/>
<dbReference type="Proteomes" id="UP000000799">
    <property type="component" value="Chromosome"/>
</dbReference>
<dbReference type="GO" id="GO:0016020">
    <property type="term" value="C:membrane"/>
    <property type="evidence" value="ECO:0007669"/>
    <property type="project" value="InterPro"/>
</dbReference>
<dbReference type="GO" id="GO:1901238">
    <property type="term" value="F:ABC-type tungstate transporter activity"/>
    <property type="evidence" value="ECO:0007669"/>
    <property type="project" value="UniProtKB-EC"/>
</dbReference>
<dbReference type="GO" id="GO:0005524">
    <property type="term" value="F:ATP binding"/>
    <property type="evidence" value="ECO:0007669"/>
    <property type="project" value="UniProtKB-KW"/>
</dbReference>
<dbReference type="GO" id="GO:0016887">
    <property type="term" value="F:ATP hydrolysis activity"/>
    <property type="evidence" value="ECO:0007669"/>
    <property type="project" value="InterPro"/>
</dbReference>
<dbReference type="CDD" id="cd03225">
    <property type="entry name" value="ABC_cobalt_CbiO_domain1"/>
    <property type="match status" value="1"/>
</dbReference>
<dbReference type="Gene3D" id="3.40.50.300">
    <property type="entry name" value="P-loop containing nucleotide triphosphate hydrolases"/>
    <property type="match status" value="1"/>
</dbReference>
<dbReference type="InterPro" id="IPR003593">
    <property type="entry name" value="AAA+_ATPase"/>
</dbReference>
<dbReference type="InterPro" id="IPR003439">
    <property type="entry name" value="ABC_transporter-like_ATP-bd"/>
</dbReference>
<dbReference type="InterPro" id="IPR017871">
    <property type="entry name" value="ABC_transporter-like_CS"/>
</dbReference>
<dbReference type="InterPro" id="IPR015856">
    <property type="entry name" value="ABC_transpr_CbiO/EcfA_su"/>
</dbReference>
<dbReference type="InterPro" id="IPR027417">
    <property type="entry name" value="P-loop_NTPase"/>
</dbReference>
<dbReference type="InterPro" id="IPR053569">
    <property type="entry name" value="Tungstate_ABC_transporter"/>
</dbReference>
<dbReference type="NCBIfam" id="NF041774">
    <property type="entry name" value="tung_ATPbind_TupC"/>
    <property type="match status" value="1"/>
</dbReference>
<dbReference type="PANTHER" id="PTHR43423">
    <property type="entry name" value="ABC TRANSPORTER I FAMILY MEMBER 17"/>
    <property type="match status" value="1"/>
</dbReference>
<dbReference type="PANTHER" id="PTHR43423:SF1">
    <property type="entry name" value="ABC TRANSPORTER I FAMILY MEMBER 17"/>
    <property type="match status" value="1"/>
</dbReference>
<dbReference type="Pfam" id="PF00005">
    <property type="entry name" value="ABC_tran"/>
    <property type="match status" value="1"/>
</dbReference>
<dbReference type="SMART" id="SM00382">
    <property type="entry name" value="AAA"/>
    <property type="match status" value="1"/>
</dbReference>
<dbReference type="SUPFAM" id="SSF52540">
    <property type="entry name" value="P-loop containing nucleoside triphosphate hydrolases"/>
    <property type="match status" value="1"/>
</dbReference>
<dbReference type="PROSITE" id="PS00211">
    <property type="entry name" value="ABC_TRANSPORTER_1"/>
    <property type="match status" value="1"/>
</dbReference>
<dbReference type="PROSITE" id="PS50893">
    <property type="entry name" value="ABC_TRANSPORTER_2"/>
    <property type="match status" value="1"/>
</dbReference>
<proteinExistence type="evidence at protein level"/>
<sequence>MIEISNLFFNYQNKEVLKIKNLKLDTSKISILMGANGSGKSTFLRILKFLEGDFSKNISYFGNFKPNNKQKREIYLLFPEPILLNRSVRANFLFTLKTYGIKEDIEERIKESLMFLNLDESLLSKHPNELSSGQSQKIAFAIALSVRAKYYLLDEPSAFLDKNTTLLFKKTILKMHENFNTGFLIASHDKHFLDSLAQKKLYLHSGEILEFENTNVFELENQGVKFCNFIDFSNCKKYKDFKKPPSKIAIDPYKISFFNSKNIPKNNYDFILEKCYIIALRSRKSDVFIRVSCMDKILEFALEKQEFLRFDLKLYEELSLYFYEDAICFLN</sequence>
<accession>Q0P887</accession>
<gene>
    <name evidence="2" type="primary">tupC</name>
    <name evidence="5" type="ordered locus">Cj1538c</name>
</gene>
<feature type="chain" id="PRO_0000435511" description="Tungstate uptake system ATP-binding protein TupC">
    <location>
        <begin position="1"/>
        <end position="331"/>
    </location>
</feature>
<feature type="domain" description="ABC transporter" evidence="1">
    <location>
        <begin position="2"/>
        <end position="230"/>
    </location>
</feature>
<feature type="binding site" evidence="1">
    <location>
        <begin position="34"/>
        <end position="41"/>
    </location>
    <ligand>
        <name>ATP</name>
        <dbReference type="ChEBI" id="CHEBI:30616"/>
    </ligand>
</feature>
<evidence type="ECO:0000255" key="1">
    <source>
        <dbReference type="PROSITE-ProRule" id="PRU00434"/>
    </source>
</evidence>
<evidence type="ECO:0000303" key="2">
    <source>
    </source>
</evidence>
<evidence type="ECO:0000305" key="3"/>
<evidence type="ECO:0000305" key="4">
    <source>
    </source>
</evidence>
<evidence type="ECO:0000312" key="5">
    <source>
        <dbReference type="EMBL" id="CAL35638.1"/>
    </source>
</evidence>
<name>TUPC_CAMJE</name>
<keyword id="KW-0067">ATP-binding</keyword>
<keyword id="KW-0547">Nucleotide-binding</keyword>
<keyword id="KW-1185">Reference proteome</keyword>
<keyword id="KW-1278">Translocase</keyword>
<keyword id="KW-0813">Transport</keyword>
<reference key="1">
    <citation type="journal article" date="2000" name="Nature">
        <title>The genome sequence of the food-borne pathogen Campylobacter jejuni reveals hypervariable sequences.</title>
        <authorList>
            <person name="Parkhill J."/>
            <person name="Wren B.W."/>
            <person name="Mungall K.L."/>
            <person name="Ketley J.M."/>
            <person name="Churcher C.M."/>
            <person name="Basham D."/>
            <person name="Chillingworth T."/>
            <person name="Davies R.M."/>
            <person name="Feltwell T."/>
            <person name="Holroyd S."/>
            <person name="Jagels K."/>
            <person name="Karlyshev A.V."/>
            <person name="Moule S."/>
            <person name="Pallen M.J."/>
            <person name="Penn C.W."/>
            <person name="Quail M.A."/>
            <person name="Rajandream M.A."/>
            <person name="Rutherford K.M."/>
            <person name="van Vliet A.H.M."/>
            <person name="Whitehead S."/>
            <person name="Barrell B.G."/>
        </authorList>
    </citation>
    <scope>NUCLEOTIDE SEQUENCE [LARGE SCALE GENOMIC DNA]</scope>
    <source>
        <strain>ATCC 700819 / NCTC 11168</strain>
    </source>
</reference>
<reference key="2">
    <citation type="journal article" date="2009" name="Mol. Microbiol.">
        <title>A role for tungsten in the biology of Campylobacter jejuni: tungstate stimulates formate dehydrogenase activity and is transported via an ultra-high affinity ABC system distinct from the molybdate transporter.</title>
        <authorList>
            <person name="Smart J.P."/>
            <person name="Cliff M.J."/>
            <person name="Kelly D.J."/>
        </authorList>
    </citation>
    <scope>PROBABLE FUNCTION IN TUNGSTATE UPTAKE</scope>
    <source>
        <strain>ATCC 700819 / NCTC 11168</strain>
    </source>
</reference>
<comment type="function">
    <text evidence="4">Part of an ABC transporter complex involved in ultra-high affinity tungstate uptake. Probably responsible for energy coupling to the transport system.</text>
</comment>
<comment type="catalytic activity">
    <reaction evidence="4">
        <text>tungstate(in) + ATP + H2O = tungstate(out) + ADP + phosphate + H(+)</text>
        <dbReference type="Rhea" id="RHEA:35027"/>
        <dbReference type="ChEBI" id="CHEBI:15377"/>
        <dbReference type="ChEBI" id="CHEBI:15378"/>
        <dbReference type="ChEBI" id="CHEBI:30616"/>
        <dbReference type="ChEBI" id="CHEBI:43474"/>
        <dbReference type="ChEBI" id="CHEBI:46502"/>
        <dbReference type="ChEBI" id="CHEBI:456216"/>
        <dbReference type="EC" id="7.3.2.6"/>
    </reaction>
</comment>
<comment type="subunit">
    <text evidence="3">The complex is composed of two ATP-binding proteins (TupC), two transmembrane proteins (TupB) and a solute-binding protein (TupA).</text>
</comment>
<comment type="similarity">
    <text evidence="3">Belongs to the ABC transporter superfamily.</text>
</comment>